<sequence length="84" mass="8963">MITAALTIYTTSWCGYCLRLKTALTANRIAYDEVDIEHNRAAAEFVGSVNGGNRTVPTVKFADGSTLTNPSADEVKAKLVKIAG</sequence>
<gene>
    <name evidence="2" type="ordered locus">Rv3198A</name>
</gene>
<protein>
    <recommendedName>
        <fullName>Putative glutaredoxin Rv3198A</fullName>
        <ecNumber>1.-.-.-</ecNumber>
    </recommendedName>
</protein>
<evidence type="ECO:0000255" key="1">
    <source>
        <dbReference type="PROSITE-ProRule" id="PRU00686"/>
    </source>
</evidence>
<evidence type="ECO:0000312" key="2">
    <source>
        <dbReference type="EMBL" id="CCP46013.1"/>
    </source>
</evidence>
<evidence type="ECO:0007829" key="3">
    <source>
        <dbReference type="PDB" id="2LQO"/>
    </source>
</evidence>
<dbReference type="EC" id="1.-.-.-"/>
<dbReference type="EMBL" id="AL123456">
    <property type="protein sequence ID" value="CCP46013.1"/>
    <property type="molecule type" value="Genomic_DNA"/>
</dbReference>
<dbReference type="RefSeq" id="YP_177941.1">
    <property type="nucleotide sequence ID" value="NC_000962.3"/>
</dbReference>
<dbReference type="PDB" id="2LQO">
    <property type="method" value="NMR"/>
    <property type="chains" value="A=3-84"/>
</dbReference>
<dbReference type="PDB" id="2LQQ">
    <property type="method" value="NMR"/>
    <property type="chains" value="A=3-84"/>
</dbReference>
<dbReference type="PDBsum" id="2LQO"/>
<dbReference type="PDBsum" id="2LQQ"/>
<dbReference type="BMRB" id="P9WN17"/>
<dbReference type="SMR" id="P9WN17"/>
<dbReference type="STRING" id="83332.Rv3198A"/>
<dbReference type="PaxDb" id="83332-Rv3198A"/>
<dbReference type="DNASU" id="3205084"/>
<dbReference type="GeneID" id="3205084"/>
<dbReference type="KEGG" id="mtu:Rv3198A"/>
<dbReference type="KEGG" id="mtv:RVBD_3198A"/>
<dbReference type="TubercuList" id="Rv3198A"/>
<dbReference type="eggNOG" id="COG0695">
    <property type="taxonomic scope" value="Bacteria"/>
</dbReference>
<dbReference type="InParanoid" id="P9WN17"/>
<dbReference type="OrthoDB" id="8991911at2"/>
<dbReference type="PhylomeDB" id="P9WN17"/>
<dbReference type="EvolutionaryTrace" id="P9WN17"/>
<dbReference type="Proteomes" id="UP000001584">
    <property type="component" value="Chromosome"/>
</dbReference>
<dbReference type="GO" id="GO:0009055">
    <property type="term" value="F:electron transfer activity"/>
    <property type="evidence" value="ECO:0000318"/>
    <property type="project" value="GO_Central"/>
</dbReference>
<dbReference type="GO" id="GO:0016491">
    <property type="term" value="F:oxidoreductase activity"/>
    <property type="evidence" value="ECO:0007669"/>
    <property type="project" value="UniProtKB-KW"/>
</dbReference>
<dbReference type="GO" id="GO:0045454">
    <property type="term" value="P:cell redox homeostasis"/>
    <property type="evidence" value="ECO:0000318"/>
    <property type="project" value="GO_Central"/>
</dbReference>
<dbReference type="CDD" id="cd02976">
    <property type="entry name" value="NrdH"/>
    <property type="match status" value="1"/>
</dbReference>
<dbReference type="Gene3D" id="3.40.30.10">
    <property type="entry name" value="Glutaredoxin"/>
    <property type="match status" value="1"/>
</dbReference>
<dbReference type="InterPro" id="IPR011915">
    <property type="entry name" value="GlrX_actino"/>
</dbReference>
<dbReference type="InterPro" id="IPR002109">
    <property type="entry name" value="Glutaredoxin"/>
</dbReference>
<dbReference type="InterPro" id="IPR051548">
    <property type="entry name" value="Grx-like_ET"/>
</dbReference>
<dbReference type="InterPro" id="IPR036249">
    <property type="entry name" value="Thioredoxin-like_sf"/>
</dbReference>
<dbReference type="NCBIfam" id="TIGR02200">
    <property type="entry name" value="GlrX_actino"/>
    <property type="match status" value="1"/>
</dbReference>
<dbReference type="PANTHER" id="PTHR34386">
    <property type="entry name" value="GLUTAREDOXIN"/>
    <property type="match status" value="1"/>
</dbReference>
<dbReference type="PANTHER" id="PTHR34386:SF1">
    <property type="entry name" value="GLUTAREDOXIN-LIKE PROTEIN NRDH"/>
    <property type="match status" value="1"/>
</dbReference>
<dbReference type="Pfam" id="PF00462">
    <property type="entry name" value="Glutaredoxin"/>
    <property type="match status" value="1"/>
</dbReference>
<dbReference type="SUPFAM" id="SSF52833">
    <property type="entry name" value="Thioredoxin-like"/>
    <property type="match status" value="1"/>
</dbReference>
<dbReference type="PROSITE" id="PS51354">
    <property type="entry name" value="GLUTAREDOXIN_2"/>
    <property type="match status" value="1"/>
</dbReference>
<feature type="chain" id="PRO_0000363861" description="Putative glutaredoxin Rv3198A">
    <location>
        <begin position="1"/>
        <end position="84"/>
    </location>
</feature>
<feature type="domain" description="Glutaredoxin" evidence="1">
    <location>
        <begin position="1"/>
        <end position="84"/>
    </location>
</feature>
<feature type="strand" evidence="3">
    <location>
        <begin position="6"/>
        <end position="10"/>
    </location>
</feature>
<feature type="helix" evidence="3">
    <location>
        <begin position="17"/>
        <end position="26"/>
    </location>
</feature>
<feature type="strand" evidence="3">
    <location>
        <begin position="32"/>
        <end position="35"/>
    </location>
</feature>
<feature type="turn" evidence="3">
    <location>
        <begin position="36"/>
        <end position="38"/>
    </location>
</feature>
<feature type="helix" evidence="3">
    <location>
        <begin position="40"/>
        <end position="49"/>
    </location>
</feature>
<feature type="strand" evidence="3">
    <location>
        <begin position="50"/>
        <end position="54"/>
    </location>
</feature>
<feature type="strand" evidence="3">
    <location>
        <begin position="58"/>
        <end position="61"/>
    </location>
</feature>
<feature type="strand" evidence="3">
    <location>
        <begin position="66"/>
        <end position="69"/>
    </location>
</feature>
<feature type="helix" evidence="3">
    <location>
        <begin position="72"/>
        <end position="83"/>
    </location>
</feature>
<organism>
    <name type="scientific">Mycobacterium tuberculosis (strain ATCC 25618 / H37Rv)</name>
    <dbReference type="NCBI Taxonomy" id="83332"/>
    <lineage>
        <taxon>Bacteria</taxon>
        <taxon>Bacillati</taxon>
        <taxon>Actinomycetota</taxon>
        <taxon>Actinomycetes</taxon>
        <taxon>Mycobacteriales</taxon>
        <taxon>Mycobacteriaceae</taxon>
        <taxon>Mycobacterium</taxon>
        <taxon>Mycobacterium tuberculosis complex</taxon>
    </lineage>
</organism>
<reference key="1">
    <citation type="journal article" date="1998" name="Nature">
        <title>Deciphering the biology of Mycobacterium tuberculosis from the complete genome sequence.</title>
        <authorList>
            <person name="Cole S.T."/>
            <person name="Brosch R."/>
            <person name="Parkhill J."/>
            <person name="Garnier T."/>
            <person name="Churcher C.M."/>
            <person name="Harris D.E."/>
            <person name="Gordon S.V."/>
            <person name="Eiglmeier K."/>
            <person name="Gas S."/>
            <person name="Barry C.E. III"/>
            <person name="Tekaia F."/>
            <person name="Badcock K."/>
            <person name="Basham D."/>
            <person name="Brown D."/>
            <person name="Chillingworth T."/>
            <person name="Connor R."/>
            <person name="Davies R.M."/>
            <person name="Devlin K."/>
            <person name="Feltwell T."/>
            <person name="Gentles S."/>
            <person name="Hamlin N."/>
            <person name="Holroyd S."/>
            <person name="Hornsby T."/>
            <person name="Jagels K."/>
            <person name="Krogh A."/>
            <person name="McLean J."/>
            <person name="Moule S."/>
            <person name="Murphy L.D."/>
            <person name="Oliver S."/>
            <person name="Osborne J."/>
            <person name="Quail M.A."/>
            <person name="Rajandream M.A."/>
            <person name="Rogers J."/>
            <person name="Rutter S."/>
            <person name="Seeger K."/>
            <person name="Skelton S."/>
            <person name="Squares S."/>
            <person name="Squares R."/>
            <person name="Sulston J.E."/>
            <person name="Taylor K."/>
            <person name="Whitehead S."/>
            <person name="Barrell B.G."/>
        </authorList>
    </citation>
    <scope>NUCLEOTIDE SEQUENCE [LARGE SCALE GENOMIC DNA]</scope>
    <source>
        <strain>ATCC 25618 / H37Rv</strain>
    </source>
</reference>
<reference key="2">
    <citation type="journal article" date="2011" name="Mol. Cell. Proteomics">
        <title>Proteogenomic analysis of Mycobacterium tuberculosis by high resolution mass spectrometry.</title>
        <authorList>
            <person name="Kelkar D.S."/>
            <person name="Kumar D."/>
            <person name="Kumar P."/>
            <person name="Balakrishnan L."/>
            <person name="Muthusamy B."/>
            <person name="Yadav A.K."/>
            <person name="Shrivastava P."/>
            <person name="Marimuthu A."/>
            <person name="Anand S."/>
            <person name="Sundaram H."/>
            <person name="Kingsbury R."/>
            <person name="Harsha H.C."/>
            <person name="Nair B."/>
            <person name="Prasad T.S."/>
            <person name="Chauhan D.S."/>
            <person name="Katoch K."/>
            <person name="Katoch V.M."/>
            <person name="Kumar P."/>
            <person name="Chaerkady R."/>
            <person name="Ramachandran S."/>
            <person name="Dash D."/>
            <person name="Pandey A."/>
        </authorList>
    </citation>
    <scope>IDENTIFICATION BY MASS SPECTROMETRY [LARGE SCALE ANALYSIS]</scope>
    <source>
        <strain>ATCC 25618 / H37Rv</strain>
    </source>
</reference>
<proteinExistence type="evidence at protein level"/>
<keyword id="KW-0002">3D-structure</keyword>
<keyword id="KW-0560">Oxidoreductase</keyword>
<keyword id="KW-1185">Reference proteome</keyword>
<name>Y3198_MYCTU</name>
<accession>P9WN17</accession>
<accession>L0TC42</accession>
<accession>Q6MX00</accession>
<accession>Q8VJ51</accession>